<dbReference type="EMBL" id="CP001341">
    <property type="protein sequence ID" value="ACL39802.1"/>
    <property type="molecule type" value="Genomic_DNA"/>
</dbReference>
<dbReference type="RefSeq" id="WP_015937022.1">
    <property type="nucleotide sequence ID" value="NC_011886.1"/>
</dbReference>
<dbReference type="SMR" id="B8H7M2"/>
<dbReference type="STRING" id="452863.Achl_1826"/>
<dbReference type="GeneID" id="97421899"/>
<dbReference type="KEGG" id="ach:Achl_1826"/>
<dbReference type="eggNOG" id="COG1481">
    <property type="taxonomic scope" value="Bacteria"/>
</dbReference>
<dbReference type="HOGENOM" id="CLU_053282_0_0_11"/>
<dbReference type="OrthoDB" id="5197218at2"/>
<dbReference type="Proteomes" id="UP000002505">
    <property type="component" value="Chromosome"/>
</dbReference>
<dbReference type="GO" id="GO:0003677">
    <property type="term" value="F:DNA binding"/>
    <property type="evidence" value="ECO:0007669"/>
    <property type="project" value="UniProtKB-UniRule"/>
</dbReference>
<dbReference type="GO" id="GO:0051301">
    <property type="term" value="P:cell division"/>
    <property type="evidence" value="ECO:0007669"/>
    <property type="project" value="UniProtKB-UniRule"/>
</dbReference>
<dbReference type="GO" id="GO:0043937">
    <property type="term" value="P:regulation of sporulation"/>
    <property type="evidence" value="ECO:0007669"/>
    <property type="project" value="InterPro"/>
</dbReference>
<dbReference type="FunFam" id="3.10.28.10:FF:000001">
    <property type="entry name" value="Probable cell division protein WhiA"/>
    <property type="match status" value="1"/>
</dbReference>
<dbReference type="Gene3D" id="3.10.28.10">
    <property type="entry name" value="Homing endonucleases"/>
    <property type="match status" value="1"/>
</dbReference>
<dbReference type="HAMAP" id="MF_01420">
    <property type="entry name" value="HTH_type_WhiA"/>
    <property type="match status" value="1"/>
</dbReference>
<dbReference type="InterPro" id="IPR027434">
    <property type="entry name" value="Homing_endonucl"/>
</dbReference>
<dbReference type="InterPro" id="IPR018478">
    <property type="entry name" value="Sporu_reg_WhiA_N_dom"/>
</dbReference>
<dbReference type="InterPro" id="IPR003802">
    <property type="entry name" value="Sporulation_regulator_WhiA"/>
</dbReference>
<dbReference type="InterPro" id="IPR023054">
    <property type="entry name" value="Sporulation_regulator_WhiA_C"/>
</dbReference>
<dbReference type="InterPro" id="IPR039518">
    <property type="entry name" value="WhiA_LAGLIDADG_dom"/>
</dbReference>
<dbReference type="NCBIfam" id="TIGR00647">
    <property type="entry name" value="DNA_bind_WhiA"/>
    <property type="match status" value="1"/>
</dbReference>
<dbReference type="PANTHER" id="PTHR37307">
    <property type="entry name" value="CELL DIVISION PROTEIN WHIA-RELATED"/>
    <property type="match status" value="1"/>
</dbReference>
<dbReference type="PANTHER" id="PTHR37307:SF1">
    <property type="entry name" value="CELL DIVISION PROTEIN WHIA-RELATED"/>
    <property type="match status" value="1"/>
</dbReference>
<dbReference type="Pfam" id="PF02650">
    <property type="entry name" value="HTH_WhiA"/>
    <property type="match status" value="1"/>
</dbReference>
<dbReference type="Pfam" id="PF14527">
    <property type="entry name" value="LAGLIDADG_WhiA"/>
    <property type="match status" value="1"/>
</dbReference>
<dbReference type="Pfam" id="PF10298">
    <property type="entry name" value="WhiA_N"/>
    <property type="match status" value="1"/>
</dbReference>
<name>WHIA_PSECP</name>
<gene>
    <name evidence="1" type="primary">whiA</name>
    <name type="ordered locus">Achl_1826</name>
</gene>
<organism>
    <name type="scientific">Pseudarthrobacter chlorophenolicus (strain ATCC 700700 / DSM 12829 / CIP 107037 / JCM 12360 / KCTC 9906 / NCIMB 13794 / A6)</name>
    <name type="common">Arthrobacter chlorophenolicus</name>
    <dbReference type="NCBI Taxonomy" id="452863"/>
    <lineage>
        <taxon>Bacteria</taxon>
        <taxon>Bacillati</taxon>
        <taxon>Actinomycetota</taxon>
        <taxon>Actinomycetes</taxon>
        <taxon>Micrococcales</taxon>
        <taxon>Micrococcaceae</taxon>
        <taxon>Pseudarthrobacter</taxon>
    </lineage>
</organism>
<reference key="1">
    <citation type="submission" date="2009-01" db="EMBL/GenBank/DDBJ databases">
        <title>Complete sequence of chromosome of Arthrobacter chlorophenolicus A6.</title>
        <authorList>
            <consortium name="US DOE Joint Genome Institute"/>
            <person name="Lucas S."/>
            <person name="Copeland A."/>
            <person name="Lapidus A."/>
            <person name="Glavina del Rio T."/>
            <person name="Tice H."/>
            <person name="Bruce D."/>
            <person name="Goodwin L."/>
            <person name="Pitluck S."/>
            <person name="Goltsman E."/>
            <person name="Clum A."/>
            <person name="Larimer F."/>
            <person name="Land M."/>
            <person name="Hauser L."/>
            <person name="Kyrpides N."/>
            <person name="Mikhailova N."/>
            <person name="Jansson J."/>
            <person name="Richardson P."/>
        </authorList>
    </citation>
    <scope>NUCLEOTIDE SEQUENCE [LARGE SCALE GENOMIC DNA]</scope>
    <source>
        <strain>ATCC 700700 / DSM 12829 / CIP 107037 / JCM 12360 / KCTC 9906 / NCIMB 13794 / A6</strain>
    </source>
</reference>
<evidence type="ECO:0000255" key="1">
    <source>
        <dbReference type="HAMAP-Rule" id="MF_01420"/>
    </source>
</evidence>
<accession>B8H7M2</accession>
<keyword id="KW-0131">Cell cycle</keyword>
<keyword id="KW-0132">Cell division</keyword>
<keyword id="KW-0238">DNA-binding</keyword>
<feature type="chain" id="PRO_0000376425" description="Probable cell division protein WhiA">
    <location>
        <begin position="1"/>
        <end position="326"/>
    </location>
</feature>
<feature type="DNA-binding region" description="H-T-H motif" evidence="1">
    <location>
        <begin position="275"/>
        <end position="308"/>
    </location>
</feature>
<comment type="function">
    <text evidence="1">Involved in cell division and chromosome segregation.</text>
</comment>
<comment type="similarity">
    <text evidence="1">Belongs to the WhiA family.</text>
</comment>
<protein>
    <recommendedName>
        <fullName evidence="1">Probable cell division protein WhiA</fullName>
    </recommendedName>
</protein>
<proteinExistence type="inferred from homology"/>
<sequence>MALTASVKEELSRLDIKKSSVRKAEVSAMLRFAGGLHIISGRIVIEAEVDLASTARRLRAAIAEVYGHQSEIIVVSAGGLRRASRYVVRVVRDGEALARQTGLLDGRGRPVRGLPSAVVNGSAADAEAVWRGAFLAHGSLTEPGRSSSLEVTCPGPESALALVGAARRLDIQAKAREVRGVDRVVIRDGDTIAALLTRMGAHDALMVWEERRMRKEVRATANRLANFDDANLRRSAQAAVAAGARVDRALEILGDDVPDHLKYAGELRVAHKQASLDELGRLADPVMTKDAIAGRIRRLLAMADKRALDLGIPGTDANVTPEMLDE</sequence>